<keyword id="KW-0256">Endoplasmic reticulum</keyword>
<keyword id="KW-0445">Lipid transport</keyword>
<keyword id="KW-0446">Lipid-binding</keyword>
<keyword id="KW-0472">Membrane</keyword>
<keyword id="KW-0496">Mitochondrion</keyword>
<keyword id="KW-1000">Mitochondrion outer membrane</keyword>
<keyword id="KW-0813">Transport</keyword>
<feature type="chain" id="PRO_0000384302" description="Mitochondrial distribution and morphology protein 12">
    <location>
        <begin position="1"/>
        <end position="401"/>
    </location>
</feature>
<feature type="domain" description="SMP-LTD" evidence="1">
    <location>
        <begin position="1"/>
        <end position="401"/>
    </location>
</feature>
<feature type="region of interest" description="Disordered" evidence="2">
    <location>
        <begin position="70"/>
        <end position="95"/>
    </location>
</feature>
<feature type="region of interest" description="Disordered" evidence="2">
    <location>
        <begin position="190"/>
        <end position="247"/>
    </location>
</feature>
<feature type="compositionally biased region" description="Acidic residues" evidence="2">
    <location>
        <begin position="70"/>
        <end position="88"/>
    </location>
</feature>
<feature type="compositionally biased region" description="Low complexity" evidence="2">
    <location>
        <begin position="195"/>
        <end position="205"/>
    </location>
</feature>
<feature type="compositionally biased region" description="Basic and acidic residues" evidence="2">
    <location>
        <begin position="209"/>
        <end position="220"/>
    </location>
</feature>
<gene>
    <name evidence="1" type="primary">MDM12</name>
    <name type="ORF">SNOG_14137</name>
</gene>
<organism>
    <name type="scientific">Phaeosphaeria nodorum (strain SN15 / ATCC MYA-4574 / FGSC 10173)</name>
    <name type="common">Glume blotch fungus</name>
    <name type="synonym">Parastagonospora nodorum</name>
    <dbReference type="NCBI Taxonomy" id="321614"/>
    <lineage>
        <taxon>Eukaryota</taxon>
        <taxon>Fungi</taxon>
        <taxon>Dikarya</taxon>
        <taxon>Ascomycota</taxon>
        <taxon>Pezizomycotina</taxon>
        <taxon>Dothideomycetes</taxon>
        <taxon>Pleosporomycetidae</taxon>
        <taxon>Pleosporales</taxon>
        <taxon>Pleosporineae</taxon>
        <taxon>Phaeosphaeriaceae</taxon>
        <taxon>Parastagonospora</taxon>
    </lineage>
</organism>
<accession>Q0U1X7</accession>
<proteinExistence type="inferred from homology"/>
<comment type="function">
    <text evidence="1">Component of the ERMES/MDM complex, which serves as a molecular tether to connect the endoplasmic reticulum (ER) and mitochondria. Components of this complex are involved in the control of mitochondrial shape and protein biogenesis, and function in nonvesicular lipid trafficking between the ER and mitochondria. MDM12 is required for the interaction of the ER-resident membrane protein MMM1 and the outer mitochondrial membrane-resident beta-barrel protein MDM10. The MDM12-MMM1 subcomplex functions in the major beta-barrel assembly pathway that is responsible for biogenesis of all mitochondrial outer membrane beta-barrel proteins, and acts in a late step after the SAM complex. The MDM10-MDM12-MMM1 subcomplex further acts in the TOM40-specific pathway after the action of the MDM12-MMM1 complex. Essential for establishing and maintaining the structure of mitochondria and maintenance of mtDNA nucleoids.</text>
</comment>
<comment type="subunit">
    <text evidence="1">Component of the ER-mitochondria encounter structure (ERMES) or MDM complex, composed of MMM1, MDM10, MDM12 and MDM34. A MMM1 homodimer associates with one molecule of MDM12 on each side in a pairwise head-to-tail manner, and the SMP-LTD domains of MMM1 and MDM12 generate a continuous hydrophobic tunnel for phospholipid trafficking.</text>
</comment>
<comment type="subcellular location">
    <subcellularLocation>
        <location evidence="1">Mitochondrion outer membrane</location>
        <topology evidence="1">Peripheral membrane protein</topology>
        <orientation evidence="1">Cytoplasmic side</orientation>
    </subcellularLocation>
    <subcellularLocation>
        <location evidence="1">Endoplasmic reticulum membrane</location>
        <topology evidence="1">Peripheral membrane protein</topology>
        <orientation evidence="1">Cytoplasmic side</orientation>
    </subcellularLocation>
    <text evidence="1">The ERMES/MDM complex localizes to a few discrete foci (around 10 per single cell), that represent mitochondria-endoplasmic reticulum junctions. These foci are often found next to mtDNA nucleoids.</text>
</comment>
<comment type="domain">
    <text evidence="1">The SMP-LTD domain is a barrel-like domain that can bind various types of glycerophospholipids in its interior and mediate their transfer between two adjacent bilayers.</text>
</comment>
<comment type="similarity">
    <text evidence="1">Belongs to the MDM12 family.</text>
</comment>
<evidence type="ECO:0000255" key="1">
    <source>
        <dbReference type="HAMAP-Rule" id="MF_03104"/>
    </source>
</evidence>
<evidence type="ECO:0000256" key="2">
    <source>
        <dbReference type="SAM" id="MobiDB-lite"/>
    </source>
</evidence>
<reference key="1">
    <citation type="journal article" date="2007" name="Plant Cell">
        <title>Dothideomycete-plant interactions illuminated by genome sequencing and EST analysis of the wheat pathogen Stagonospora nodorum.</title>
        <authorList>
            <person name="Hane J.K."/>
            <person name="Lowe R.G.T."/>
            <person name="Solomon P.S."/>
            <person name="Tan K.-C."/>
            <person name="Schoch C.L."/>
            <person name="Spatafora J.W."/>
            <person name="Crous P.W."/>
            <person name="Kodira C.D."/>
            <person name="Birren B.W."/>
            <person name="Galagan J.E."/>
            <person name="Torriani S.F.F."/>
            <person name="McDonald B.A."/>
            <person name="Oliver R.P."/>
        </authorList>
    </citation>
    <scope>NUCLEOTIDE SEQUENCE [LARGE SCALE GENOMIC DNA]</scope>
    <source>
        <strain>SN15 / ATCC MYA-4574 / FGSC 10173</strain>
    </source>
</reference>
<sequence>MSIDINWDTLTGGADGAARAETIRAFIHDKFQQVTLPKFIRSVHVHSFDFGSASPEIEIKDICDPLPDFYEEDEDYPDNEDDDDDEAGLDSNPRNKCITRKGTNFKSVAISLVARQFETSHQSALTPGIPGGTSNINYFHLPLSAGLSGATTPLAAVAGAQLQGWLDNPYGRPSTPTNMRRLRHAASFNSLTLTPQSHPDPSSRPSSRHQHDDERRRSLAESDDASSQHGYDRTPSVSPHPMREKSPEDIQVVAHVQYSGDIKMSLTAEILLDYPMQSFVGIPLKLNITGLTFDGVALLAYIKRRAHFCFLSPDDAEALVGSDAGFNGLQTDSNGENAQPVQRPKIGGLLENIRVESEIGGQGSGKQVLKNVGKVESFVLEQVRRIFEDEFVYPSFWTFLV</sequence>
<name>MDM12_PHANO</name>
<dbReference type="EMBL" id="CH445354">
    <property type="protein sequence ID" value="EAT78374.2"/>
    <property type="molecule type" value="Genomic_DNA"/>
</dbReference>
<dbReference type="RefSeq" id="XP_001804334.1">
    <property type="nucleotide sequence ID" value="XM_001804282.1"/>
</dbReference>
<dbReference type="FunCoup" id="Q0U1X7">
    <property type="interactions" value="41"/>
</dbReference>
<dbReference type="STRING" id="321614.Q0U1X7"/>
<dbReference type="EnsemblFungi" id="SNOT_14137">
    <property type="protein sequence ID" value="SNOT_14137"/>
    <property type="gene ID" value="SNOG_14137"/>
</dbReference>
<dbReference type="GeneID" id="5981257"/>
<dbReference type="KEGG" id="pno:SNOG_14137"/>
<dbReference type="VEuPathDB" id="FungiDB:JI435_141370"/>
<dbReference type="eggNOG" id="ENOG502S3PB">
    <property type="taxonomic scope" value="Eukaryota"/>
</dbReference>
<dbReference type="HOGENOM" id="CLU_026794_0_0_1"/>
<dbReference type="InParanoid" id="Q0U1X7"/>
<dbReference type="Proteomes" id="UP000001055">
    <property type="component" value="Unassembled WGS sequence"/>
</dbReference>
<dbReference type="GO" id="GO:0005789">
    <property type="term" value="C:endoplasmic reticulum membrane"/>
    <property type="evidence" value="ECO:0007669"/>
    <property type="project" value="UniProtKB-SubCell"/>
</dbReference>
<dbReference type="GO" id="GO:0032865">
    <property type="term" value="C:ERMES complex"/>
    <property type="evidence" value="ECO:0000318"/>
    <property type="project" value="GO_Central"/>
</dbReference>
<dbReference type="GO" id="GO:0008289">
    <property type="term" value="F:lipid binding"/>
    <property type="evidence" value="ECO:0007669"/>
    <property type="project" value="UniProtKB-KW"/>
</dbReference>
<dbReference type="GO" id="GO:0000002">
    <property type="term" value="P:mitochondrial genome maintenance"/>
    <property type="evidence" value="ECO:0007669"/>
    <property type="project" value="UniProtKB-UniRule"/>
</dbReference>
<dbReference type="GO" id="GO:1990456">
    <property type="term" value="P:mitochondrion-endoplasmic reticulum membrane tethering"/>
    <property type="evidence" value="ECO:0000318"/>
    <property type="project" value="GO_Central"/>
</dbReference>
<dbReference type="GO" id="GO:0015914">
    <property type="term" value="P:phospholipid transport"/>
    <property type="evidence" value="ECO:0000318"/>
    <property type="project" value="GO_Central"/>
</dbReference>
<dbReference type="GO" id="GO:0045040">
    <property type="term" value="P:protein insertion into mitochondrial outer membrane"/>
    <property type="evidence" value="ECO:0007669"/>
    <property type="project" value="UniProtKB-UniRule"/>
</dbReference>
<dbReference type="CDD" id="cd21672">
    <property type="entry name" value="SMP_Mdm12"/>
    <property type="match status" value="1"/>
</dbReference>
<dbReference type="HAMAP" id="MF_03104">
    <property type="entry name" value="Mdm12"/>
    <property type="match status" value="1"/>
</dbReference>
<dbReference type="InterPro" id="IPR027532">
    <property type="entry name" value="Mdm12"/>
</dbReference>
<dbReference type="InterPro" id="IPR031468">
    <property type="entry name" value="SMP_LBD"/>
</dbReference>
<dbReference type="PANTHER" id="PTHR28204">
    <property type="entry name" value="MITOCHONDRIAL DISTRIBUTION AND MORPHOLOGY PROTEIN 12"/>
    <property type="match status" value="1"/>
</dbReference>
<dbReference type="PANTHER" id="PTHR28204:SF1">
    <property type="entry name" value="MITOCHONDRIAL DISTRIBUTION AND MORPHOLOGY PROTEIN 12"/>
    <property type="match status" value="1"/>
</dbReference>
<dbReference type="PROSITE" id="PS51847">
    <property type="entry name" value="SMP"/>
    <property type="match status" value="1"/>
</dbReference>
<protein>
    <recommendedName>
        <fullName evidence="1">Mitochondrial distribution and morphology protein 12</fullName>
    </recommendedName>
    <alternativeName>
        <fullName evidence="1">Mitochondrial inheritance component MDM12</fullName>
    </alternativeName>
</protein>